<proteinExistence type="inferred from homology"/>
<accession>B7VHJ7</accession>
<sequence>MRPNDRAVDQIRPIKITRNYTAYAEGSVLVEFGNTKVLCNATVEENVPRWLKGQGKGWVTAEYGMLPRATHTRNRREAASGKQGGRTMEIQRLIARSLRAVVDLKVMGEIMITVDCDVIQADGGTRTASISGASVAMADAINSLLASGKLKKNPMKGHVAAVSVGIVGAQALCDLEYVEDSAADTDMNVVMTEDGKMIEIQGTAEGEPFSHEELMQLLALANKGIADIVEAQKAALAD</sequence>
<reference key="1">
    <citation type="submission" date="2009-02" db="EMBL/GenBank/DDBJ databases">
        <title>Vibrio splendidus str. LGP32 complete genome.</title>
        <authorList>
            <person name="Mazel D."/>
            <person name="Le Roux F."/>
        </authorList>
    </citation>
    <scope>NUCLEOTIDE SEQUENCE [LARGE SCALE GENOMIC DNA]</scope>
    <source>
        <strain>LGP32</strain>
    </source>
</reference>
<evidence type="ECO:0000255" key="1">
    <source>
        <dbReference type="HAMAP-Rule" id="MF_00564"/>
    </source>
</evidence>
<name>RNPH_VIBA3</name>
<protein>
    <recommendedName>
        <fullName evidence="1">Ribonuclease PH</fullName>
        <shortName evidence="1">RNase PH</shortName>
        <ecNumber evidence="1">2.7.7.56</ecNumber>
    </recommendedName>
    <alternativeName>
        <fullName evidence="1">tRNA nucleotidyltransferase</fullName>
    </alternativeName>
</protein>
<keyword id="KW-0548">Nucleotidyltransferase</keyword>
<keyword id="KW-0694">RNA-binding</keyword>
<keyword id="KW-0698">rRNA processing</keyword>
<keyword id="KW-0808">Transferase</keyword>
<keyword id="KW-0819">tRNA processing</keyword>
<keyword id="KW-0820">tRNA-binding</keyword>
<feature type="chain" id="PRO_1000146789" description="Ribonuclease PH">
    <location>
        <begin position="1"/>
        <end position="238"/>
    </location>
</feature>
<feature type="binding site" evidence="1">
    <location>
        <position position="86"/>
    </location>
    <ligand>
        <name>phosphate</name>
        <dbReference type="ChEBI" id="CHEBI:43474"/>
        <note>substrate</note>
    </ligand>
</feature>
<feature type="binding site" evidence="1">
    <location>
        <begin position="124"/>
        <end position="126"/>
    </location>
    <ligand>
        <name>phosphate</name>
        <dbReference type="ChEBI" id="CHEBI:43474"/>
        <note>substrate</note>
    </ligand>
</feature>
<comment type="function">
    <text evidence="1">Phosphorolytic 3'-5' exoribonuclease that plays an important role in tRNA 3'-end maturation. Removes nucleotide residues following the 3'-CCA terminus of tRNAs; can also add nucleotides to the ends of RNA molecules by using nucleoside diphosphates as substrates, but this may not be physiologically important. Probably plays a role in initiation of 16S rRNA degradation (leading to ribosome degradation) during starvation.</text>
</comment>
<comment type="catalytic activity">
    <reaction evidence="1">
        <text>tRNA(n+1) + phosphate = tRNA(n) + a ribonucleoside 5'-diphosphate</text>
        <dbReference type="Rhea" id="RHEA:10628"/>
        <dbReference type="Rhea" id="RHEA-COMP:17343"/>
        <dbReference type="Rhea" id="RHEA-COMP:17344"/>
        <dbReference type="ChEBI" id="CHEBI:43474"/>
        <dbReference type="ChEBI" id="CHEBI:57930"/>
        <dbReference type="ChEBI" id="CHEBI:173114"/>
        <dbReference type="EC" id="2.7.7.56"/>
    </reaction>
</comment>
<comment type="subunit">
    <text evidence="1">Homohexameric ring arranged as a trimer of dimers.</text>
</comment>
<comment type="similarity">
    <text evidence="1">Belongs to the RNase PH family.</text>
</comment>
<gene>
    <name evidence="1" type="primary">rph</name>
    <name type="ordered locus">VS_0177</name>
</gene>
<organism>
    <name type="scientific">Vibrio atlanticus (strain LGP32)</name>
    <name type="common">Vibrio splendidus (strain Mel32)</name>
    <dbReference type="NCBI Taxonomy" id="575788"/>
    <lineage>
        <taxon>Bacteria</taxon>
        <taxon>Pseudomonadati</taxon>
        <taxon>Pseudomonadota</taxon>
        <taxon>Gammaproteobacteria</taxon>
        <taxon>Vibrionales</taxon>
        <taxon>Vibrionaceae</taxon>
        <taxon>Vibrio</taxon>
    </lineage>
</organism>
<dbReference type="EC" id="2.7.7.56" evidence="1"/>
<dbReference type="EMBL" id="FM954972">
    <property type="protein sequence ID" value="CAV17209.1"/>
    <property type="molecule type" value="Genomic_DNA"/>
</dbReference>
<dbReference type="SMR" id="B7VHJ7"/>
<dbReference type="STRING" id="575788.VS_0177"/>
<dbReference type="KEGG" id="vsp:VS_0177"/>
<dbReference type="eggNOG" id="COG0689">
    <property type="taxonomic scope" value="Bacteria"/>
</dbReference>
<dbReference type="HOGENOM" id="CLU_050858_0_0_6"/>
<dbReference type="Proteomes" id="UP000009100">
    <property type="component" value="Chromosome 1"/>
</dbReference>
<dbReference type="GO" id="GO:0000175">
    <property type="term" value="F:3'-5'-RNA exonuclease activity"/>
    <property type="evidence" value="ECO:0007669"/>
    <property type="project" value="UniProtKB-UniRule"/>
</dbReference>
<dbReference type="GO" id="GO:0000049">
    <property type="term" value="F:tRNA binding"/>
    <property type="evidence" value="ECO:0007669"/>
    <property type="project" value="UniProtKB-UniRule"/>
</dbReference>
<dbReference type="GO" id="GO:0009022">
    <property type="term" value="F:tRNA nucleotidyltransferase activity"/>
    <property type="evidence" value="ECO:0007669"/>
    <property type="project" value="UniProtKB-UniRule"/>
</dbReference>
<dbReference type="GO" id="GO:0016075">
    <property type="term" value="P:rRNA catabolic process"/>
    <property type="evidence" value="ECO:0007669"/>
    <property type="project" value="UniProtKB-UniRule"/>
</dbReference>
<dbReference type="GO" id="GO:0006364">
    <property type="term" value="P:rRNA processing"/>
    <property type="evidence" value="ECO:0007669"/>
    <property type="project" value="UniProtKB-KW"/>
</dbReference>
<dbReference type="GO" id="GO:0008033">
    <property type="term" value="P:tRNA processing"/>
    <property type="evidence" value="ECO:0007669"/>
    <property type="project" value="UniProtKB-UniRule"/>
</dbReference>
<dbReference type="CDD" id="cd11362">
    <property type="entry name" value="RNase_PH_bact"/>
    <property type="match status" value="1"/>
</dbReference>
<dbReference type="FunFam" id="3.30.230.70:FF:000003">
    <property type="entry name" value="Ribonuclease PH"/>
    <property type="match status" value="1"/>
</dbReference>
<dbReference type="Gene3D" id="3.30.230.70">
    <property type="entry name" value="GHMP Kinase, N-terminal domain"/>
    <property type="match status" value="1"/>
</dbReference>
<dbReference type="HAMAP" id="MF_00564">
    <property type="entry name" value="RNase_PH"/>
    <property type="match status" value="1"/>
</dbReference>
<dbReference type="InterPro" id="IPR001247">
    <property type="entry name" value="ExoRNase_PH_dom1"/>
</dbReference>
<dbReference type="InterPro" id="IPR015847">
    <property type="entry name" value="ExoRNase_PH_dom2"/>
</dbReference>
<dbReference type="InterPro" id="IPR036345">
    <property type="entry name" value="ExoRNase_PH_dom2_sf"/>
</dbReference>
<dbReference type="InterPro" id="IPR027408">
    <property type="entry name" value="PNPase/RNase_PH_dom_sf"/>
</dbReference>
<dbReference type="InterPro" id="IPR020568">
    <property type="entry name" value="Ribosomal_Su5_D2-typ_SF"/>
</dbReference>
<dbReference type="InterPro" id="IPR050080">
    <property type="entry name" value="RNase_PH"/>
</dbReference>
<dbReference type="InterPro" id="IPR002381">
    <property type="entry name" value="RNase_PH_bac-type"/>
</dbReference>
<dbReference type="InterPro" id="IPR018336">
    <property type="entry name" value="RNase_PH_CS"/>
</dbReference>
<dbReference type="NCBIfam" id="TIGR01966">
    <property type="entry name" value="RNasePH"/>
    <property type="match status" value="1"/>
</dbReference>
<dbReference type="PANTHER" id="PTHR11953">
    <property type="entry name" value="EXOSOME COMPLEX COMPONENT"/>
    <property type="match status" value="1"/>
</dbReference>
<dbReference type="PANTHER" id="PTHR11953:SF0">
    <property type="entry name" value="EXOSOME COMPLEX COMPONENT RRP41"/>
    <property type="match status" value="1"/>
</dbReference>
<dbReference type="Pfam" id="PF01138">
    <property type="entry name" value="RNase_PH"/>
    <property type="match status" value="1"/>
</dbReference>
<dbReference type="Pfam" id="PF03725">
    <property type="entry name" value="RNase_PH_C"/>
    <property type="match status" value="1"/>
</dbReference>
<dbReference type="SUPFAM" id="SSF55666">
    <property type="entry name" value="Ribonuclease PH domain 2-like"/>
    <property type="match status" value="1"/>
</dbReference>
<dbReference type="SUPFAM" id="SSF54211">
    <property type="entry name" value="Ribosomal protein S5 domain 2-like"/>
    <property type="match status" value="1"/>
</dbReference>
<dbReference type="PROSITE" id="PS01277">
    <property type="entry name" value="RIBONUCLEASE_PH"/>
    <property type="match status" value="1"/>
</dbReference>